<organism>
    <name type="scientific">Pseudomonas putida (strain ATCC 47054 / DSM 6125 / CFBP 8728 / NCIMB 11950 / KT2440)</name>
    <dbReference type="NCBI Taxonomy" id="160488"/>
    <lineage>
        <taxon>Bacteria</taxon>
        <taxon>Pseudomonadati</taxon>
        <taxon>Pseudomonadota</taxon>
        <taxon>Gammaproteobacteria</taxon>
        <taxon>Pseudomonadales</taxon>
        <taxon>Pseudomonadaceae</taxon>
        <taxon>Pseudomonas</taxon>
    </lineage>
</organism>
<proteinExistence type="inferred from homology"/>
<dbReference type="EC" id="6.3.2.1" evidence="1"/>
<dbReference type="EMBL" id="AE015451">
    <property type="protein sequence ID" value="AAN70273.1"/>
    <property type="molecule type" value="Genomic_DNA"/>
</dbReference>
<dbReference type="RefSeq" id="NP_746809.1">
    <property type="nucleotide sequence ID" value="NC_002947.4"/>
</dbReference>
<dbReference type="RefSeq" id="WP_010955349.1">
    <property type="nucleotide sequence ID" value="NZ_CP169744.1"/>
</dbReference>
<dbReference type="SMR" id="Q88DW8"/>
<dbReference type="STRING" id="160488.PP_4700"/>
<dbReference type="PaxDb" id="160488-PP_4700"/>
<dbReference type="GeneID" id="83682414"/>
<dbReference type="KEGG" id="ppu:PP_4700"/>
<dbReference type="PATRIC" id="fig|160488.4.peg.5010"/>
<dbReference type="eggNOG" id="COG0414">
    <property type="taxonomic scope" value="Bacteria"/>
</dbReference>
<dbReference type="HOGENOM" id="CLU_047148_0_0_6"/>
<dbReference type="OrthoDB" id="9773087at2"/>
<dbReference type="PhylomeDB" id="Q88DW8"/>
<dbReference type="BioCyc" id="PPUT160488:G1G01-5021-MONOMER"/>
<dbReference type="UniPathway" id="UPA00028">
    <property type="reaction ID" value="UER00005"/>
</dbReference>
<dbReference type="Proteomes" id="UP000000556">
    <property type="component" value="Chromosome"/>
</dbReference>
<dbReference type="GO" id="GO:0005829">
    <property type="term" value="C:cytosol"/>
    <property type="evidence" value="ECO:0007669"/>
    <property type="project" value="TreeGrafter"/>
</dbReference>
<dbReference type="GO" id="GO:0005524">
    <property type="term" value="F:ATP binding"/>
    <property type="evidence" value="ECO:0007669"/>
    <property type="project" value="UniProtKB-KW"/>
</dbReference>
<dbReference type="GO" id="GO:0004592">
    <property type="term" value="F:pantoate-beta-alanine ligase activity"/>
    <property type="evidence" value="ECO:0007669"/>
    <property type="project" value="UniProtKB-UniRule"/>
</dbReference>
<dbReference type="GO" id="GO:0015940">
    <property type="term" value="P:pantothenate biosynthetic process"/>
    <property type="evidence" value="ECO:0007669"/>
    <property type="project" value="UniProtKB-UniRule"/>
</dbReference>
<dbReference type="CDD" id="cd00560">
    <property type="entry name" value="PanC"/>
    <property type="match status" value="1"/>
</dbReference>
<dbReference type="FunFam" id="3.30.1300.10:FF:000001">
    <property type="entry name" value="Pantothenate synthetase"/>
    <property type="match status" value="1"/>
</dbReference>
<dbReference type="FunFam" id="3.40.50.620:FF:000013">
    <property type="entry name" value="Pantothenate synthetase"/>
    <property type="match status" value="1"/>
</dbReference>
<dbReference type="Gene3D" id="3.40.50.620">
    <property type="entry name" value="HUPs"/>
    <property type="match status" value="1"/>
</dbReference>
<dbReference type="Gene3D" id="3.30.1300.10">
    <property type="entry name" value="Pantoate-beta-alanine ligase, C-terminal domain"/>
    <property type="match status" value="1"/>
</dbReference>
<dbReference type="HAMAP" id="MF_00158">
    <property type="entry name" value="PanC"/>
    <property type="match status" value="1"/>
</dbReference>
<dbReference type="InterPro" id="IPR003721">
    <property type="entry name" value="Pantoate_ligase"/>
</dbReference>
<dbReference type="InterPro" id="IPR042176">
    <property type="entry name" value="Pantoate_ligase_C"/>
</dbReference>
<dbReference type="InterPro" id="IPR014729">
    <property type="entry name" value="Rossmann-like_a/b/a_fold"/>
</dbReference>
<dbReference type="NCBIfam" id="TIGR00018">
    <property type="entry name" value="panC"/>
    <property type="match status" value="1"/>
</dbReference>
<dbReference type="PANTHER" id="PTHR21299">
    <property type="entry name" value="CYTIDYLATE KINASE/PANTOATE-BETA-ALANINE LIGASE"/>
    <property type="match status" value="1"/>
</dbReference>
<dbReference type="PANTHER" id="PTHR21299:SF1">
    <property type="entry name" value="PANTOATE--BETA-ALANINE LIGASE"/>
    <property type="match status" value="1"/>
</dbReference>
<dbReference type="Pfam" id="PF02569">
    <property type="entry name" value="Pantoate_ligase"/>
    <property type="match status" value="1"/>
</dbReference>
<dbReference type="SUPFAM" id="SSF52374">
    <property type="entry name" value="Nucleotidylyl transferase"/>
    <property type="match status" value="1"/>
</dbReference>
<keyword id="KW-0067">ATP-binding</keyword>
<keyword id="KW-0963">Cytoplasm</keyword>
<keyword id="KW-0436">Ligase</keyword>
<keyword id="KW-0547">Nucleotide-binding</keyword>
<keyword id="KW-0566">Pantothenate biosynthesis</keyword>
<keyword id="KW-1185">Reference proteome</keyword>
<reference key="1">
    <citation type="journal article" date="2002" name="Environ. Microbiol.">
        <title>Complete genome sequence and comparative analysis of the metabolically versatile Pseudomonas putida KT2440.</title>
        <authorList>
            <person name="Nelson K.E."/>
            <person name="Weinel C."/>
            <person name="Paulsen I.T."/>
            <person name="Dodson R.J."/>
            <person name="Hilbert H."/>
            <person name="Martins dos Santos V.A.P."/>
            <person name="Fouts D.E."/>
            <person name="Gill S.R."/>
            <person name="Pop M."/>
            <person name="Holmes M."/>
            <person name="Brinkac L.M."/>
            <person name="Beanan M.J."/>
            <person name="DeBoy R.T."/>
            <person name="Daugherty S.C."/>
            <person name="Kolonay J.F."/>
            <person name="Madupu R."/>
            <person name="Nelson W.C."/>
            <person name="White O."/>
            <person name="Peterson J.D."/>
            <person name="Khouri H.M."/>
            <person name="Hance I."/>
            <person name="Chris Lee P."/>
            <person name="Holtzapple E.K."/>
            <person name="Scanlan D."/>
            <person name="Tran K."/>
            <person name="Moazzez A."/>
            <person name="Utterback T.R."/>
            <person name="Rizzo M."/>
            <person name="Lee K."/>
            <person name="Kosack D."/>
            <person name="Moestl D."/>
            <person name="Wedler H."/>
            <person name="Lauber J."/>
            <person name="Stjepandic D."/>
            <person name="Hoheisel J."/>
            <person name="Straetz M."/>
            <person name="Heim S."/>
            <person name="Kiewitz C."/>
            <person name="Eisen J.A."/>
            <person name="Timmis K.N."/>
            <person name="Duesterhoeft A."/>
            <person name="Tuemmler B."/>
            <person name="Fraser C.M."/>
        </authorList>
    </citation>
    <scope>NUCLEOTIDE SEQUENCE [LARGE SCALE GENOMIC DNA]</scope>
    <source>
        <strain>ATCC 47054 / DSM 6125 / CFBP 8728 / NCIMB 11950 / KT2440</strain>
    </source>
</reference>
<feature type="chain" id="PRO_0000128257" description="Pantothenate synthetase">
    <location>
        <begin position="1"/>
        <end position="287"/>
    </location>
</feature>
<feature type="active site" description="Proton donor" evidence="1">
    <location>
        <position position="37"/>
    </location>
</feature>
<feature type="binding site" evidence="1">
    <location>
        <begin position="30"/>
        <end position="37"/>
    </location>
    <ligand>
        <name>ATP</name>
        <dbReference type="ChEBI" id="CHEBI:30616"/>
    </ligand>
</feature>
<feature type="binding site" evidence="1">
    <location>
        <position position="61"/>
    </location>
    <ligand>
        <name>(R)-pantoate</name>
        <dbReference type="ChEBI" id="CHEBI:15980"/>
    </ligand>
</feature>
<feature type="binding site" evidence="1">
    <location>
        <position position="61"/>
    </location>
    <ligand>
        <name>beta-alanine</name>
        <dbReference type="ChEBI" id="CHEBI:57966"/>
    </ligand>
</feature>
<feature type="binding site" evidence="1">
    <location>
        <begin position="149"/>
        <end position="152"/>
    </location>
    <ligand>
        <name>ATP</name>
        <dbReference type="ChEBI" id="CHEBI:30616"/>
    </ligand>
</feature>
<feature type="binding site" evidence="1">
    <location>
        <position position="155"/>
    </location>
    <ligand>
        <name>(R)-pantoate</name>
        <dbReference type="ChEBI" id="CHEBI:15980"/>
    </ligand>
</feature>
<feature type="binding site" evidence="1">
    <location>
        <position position="178"/>
    </location>
    <ligand>
        <name>ATP</name>
        <dbReference type="ChEBI" id="CHEBI:30616"/>
    </ligand>
</feature>
<feature type="binding site" evidence="1">
    <location>
        <begin position="186"/>
        <end position="189"/>
    </location>
    <ligand>
        <name>ATP</name>
        <dbReference type="ChEBI" id="CHEBI:30616"/>
    </ligand>
</feature>
<comment type="function">
    <text evidence="1">Catalyzes the condensation of pantoate with beta-alanine in an ATP-dependent reaction via a pantoyl-adenylate intermediate.</text>
</comment>
<comment type="catalytic activity">
    <reaction evidence="1">
        <text>(R)-pantoate + beta-alanine + ATP = (R)-pantothenate + AMP + diphosphate + H(+)</text>
        <dbReference type="Rhea" id="RHEA:10912"/>
        <dbReference type="ChEBI" id="CHEBI:15378"/>
        <dbReference type="ChEBI" id="CHEBI:15980"/>
        <dbReference type="ChEBI" id="CHEBI:29032"/>
        <dbReference type="ChEBI" id="CHEBI:30616"/>
        <dbReference type="ChEBI" id="CHEBI:33019"/>
        <dbReference type="ChEBI" id="CHEBI:57966"/>
        <dbReference type="ChEBI" id="CHEBI:456215"/>
        <dbReference type="EC" id="6.3.2.1"/>
    </reaction>
</comment>
<comment type="pathway">
    <text evidence="1">Cofactor biosynthesis; (R)-pantothenate biosynthesis; (R)-pantothenate from (R)-pantoate and beta-alanine: step 1/1.</text>
</comment>
<comment type="subunit">
    <text evidence="1">Homodimer.</text>
</comment>
<comment type="subcellular location">
    <subcellularLocation>
        <location evidence="1">Cytoplasm</location>
    </subcellularLocation>
</comment>
<comment type="miscellaneous">
    <text evidence="1">The reaction proceeds by a bi uni uni bi ping pong mechanism.</text>
</comment>
<comment type="similarity">
    <text evidence="1">Belongs to the pantothenate synthetase family.</text>
</comment>
<gene>
    <name evidence="1" type="primary">panC</name>
    <name type="ordered locus">PP_4700</name>
</gene>
<sequence length="287" mass="31190">MNTVKTVRELRAAVARARGEGKRIGFVPTMGNLHSGHAALVTKAAQRADFVVASIFVNPLQFGANEDLDKYPRTLAADQERLVQAGCNLLFAPTVEEMYPDGMSVQTRVSVPQLSEGLCGASRPGHFEGVATVVNKLFNMVQPDLAVFGEKDYQQLAVIRAMVRDLNMPIQIIGEPTVRAEDGLALSSRNGYLTPEQRTAAPALYRTLQHIAAGIGRGQRDFAALVAEGQAQLSAAGFRPDYLEVRHAVSLRPAVINDRDLVVIAAAYLGNTRLIDNLYLHLEEKTA</sequence>
<evidence type="ECO:0000255" key="1">
    <source>
        <dbReference type="HAMAP-Rule" id="MF_00158"/>
    </source>
</evidence>
<protein>
    <recommendedName>
        <fullName evidence="1">Pantothenate synthetase</fullName>
        <shortName evidence="1">PS</shortName>
        <ecNumber evidence="1">6.3.2.1</ecNumber>
    </recommendedName>
    <alternativeName>
        <fullName evidence="1">Pantoate--beta-alanine ligase</fullName>
    </alternativeName>
    <alternativeName>
        <fullName evidence="1">Pantoate-activating enzyme</fullName>
    </alternativeName>
</protein>
<accession>Q88DW8</accession>
<name>PANC_PSEPK</name>